<accession>Q04GD7</accession>
<dbReference type="EC" id="2.4.2.22" evidence="1"/>
<dbReference type="EMBL" id="CP000411">
    <property type="protein sequence ID" value="ABJ56485.1"/>
    <property type="molecule type" value="Genomic_DNA"/>
</dbReference>
<dbReference type="SMR" id="Q04GD7"/>
<dbReference type="STRING" id="203123.OEOE_0537"/>
<dbReference type="KEGG" id="ooe:OEOE_0537"/>
<dbReference type="PATRIC" id="fig|203123.7.peg.543"/>
<dbReference type="eggNOG" id="COG0503">
    <property type="taxonomic scope" value="Bacteria"/>
</dbReference>
<dbReference type="HOGENOM" id="CLU_099015_0_0_9"/>
<dbReference type="UniPathway" id="UPA00602">
    <property type="reaction ID" value="UER00658"/>
</dbReference>
<dbReference type="Proteomes" id="UP000000774">
    <property type="component" value="Chromosome"/>
</dbReference>
<dbReference type="GO" id="GO:0005737">
    <property type="term" value="C:cytoplasm"/>
    <property type="evidence" value="ECO:0007669"/>
    <property type="project" value="UniProtKB-SubCell"/>
</dbReference>
<dbReference type="GO" id="GO:0000310">
    <property type="term" value="F:xanthine phosphoribosyltransferase activity"/>
    <property type="evidence" value="ECO:0007669"/>
    <property type="project" value="UniProtKB-UniRule"/>
</dbReference>
<dbReference type="GO" id="GO:0006166">
    <property type="term" value="P:purine ribonucleoside salvage"/>
    <property type="evidence" value="ECO:0007669"/>
    <property type="project" value="UniProtKB-KW"/>
</dbReference>
<dbReference type="GO" id="GO:0046110">
    <property type="term" value="P:xanthine metabolic process"/>
    <property type="evidence" value="ECO:0007669"/>
    <property type="project" value="InterPro"/>
</dbReference>
<dbReference type="GO" id="GO:0032265">
    <property type="term" value="P:XMP salvage"/>
    <property type="evidence" value="ECO:0007669"/>
    <property type="project" value="UniProtKB-UniRule"/>
</dbReference>
<dbReference type="CDD" id="cd06223">
    <property type="entry name" value="PRTases_typeI"/>
    <property type="match status" value="1"/>
</dbReference>
<dbReference type="Gene3D" id="3.40.50.2020">
    <property type="match status" value="1"/>
</dbReference>
<dbReference type="HAMAP" id="MF_01184">
    <property type="entry name" value="XPRTase"/>
    <property type="match status" value="1"/>
</dbReference>
<dbReference type="InterPro" id="IPR000836">
    <property type="entry name" value="PRibTrfase_dom"/>
</dbReference>
<dbReference type="InterPro" id="IPR029057">
    <property type="entry name" value="PRTase-like"/>
</dbReference>
<dbReference type="InterPro" id="IPR050118">
    <property type="entry name" value="Pur/Pyrimidine_PRTase"/>
</dbReference>
<dbReference type="InterPro" id="IPR010079">
    <property type="entry name" value="Xanthine_PRibTrfase"/>
</dbReference>
<dbReference type="NCBIfam" id="NF006671">
    <property type="entry name" value="PRK09219.1"/>
    <property type="match status" value="1"/>
</dbReference>
<dbReference type="NCBIfam" id="TIGR01744">
    <property type="entry name" value="XPRTase"/>
    <property type="match status" value="1"/>
</dbReference>
<dbReference type="PANTHER" id="PTHR43864">
    <property type="entry name" value="HYPOXANTHINE/GUANINE PHOSPHORIBOSYLTRANSFERASE"/>
    <property type="match status" value="1"/>
</dbReference>
<dbReference type="PANTHER" id="PTHR43864:SF1">
    <property type="entry name" value="XANTHINE PHOSPHORIBOSYLTRANSFERASE"/>
    <property type="match status" value="1"/>
</dbReference>
<dbReference type="Pfam" id="PF00156">
    <property type="entry name" value="Pribosyltran"/>
    <property type="match status" value="1"/>
</dbReference>
<dbReference type="SUPFAM" id="SSF53271">
    <property type="entry name" value="PRTase-like"/>
    <property type="match status" value="1"/>
</dbReference>
<reference key="1">
    <citation type="journal article" date="2006" name="Proc. Natl. Acad. Sci. U.S.A.">
        <title>Comparative genomics of the lactic acid bacteria.</title>
        <authorList>
            <person name="Makarova K.S."/>
            <person name="Slesarev A."/>
            <person name="Wolf Y.I."/>
            <person name="Sorokin A."/>
            <person name="Mirkin B."/>
            <person name="Koonin E.V."/>
            <person name="Pavlov A."/>
            <person name="Pavlova N."/>
            <person name="Karamychev V."/>
            <person name="Polouchine N."/>
            <person name="Shakhova V."/>
            <person name="Grigoriev I."/>
            <person name="Lou Y."/>
            <person name="Rohksar D."/>
            <person name="Lucas S."/>
            <person name="Huang K."/>
            <person name="Goodstein D.M."/>
            <person name="Hawkins T."/>
            <person name="Plengvidhya V."/>
            <person name="Welker D."/>
            <person name="Hughes J."/>
            <person name="Goh Y."/>
            <person name="Benson A."/>
            <person name="Baldwin K."/>
            <person name="Lee J.-H."/>
            <person name="Diaz-Muniz I."/>
            <person name="Dosti B."/>
            <person name="Smeianov V."/>
            <person name="Wechter W."/>
            <person name="Barabote R."/>
            <person name="Lorca G."/>
            <person name="Altermann E."/>
            <person name="Barrangou R."/>
            <person name="Ganesan B."/>
            <person name="Xie Y."/>
            <person name="Rawsthorne H."/>
            <person name="Tamir D."/>
            <person name="Parker C."/>
            <person name="Breidt F."/>
            <person name="Broadbent J.R."/>
            <person name="Hutkins R."/>
            <person name="O'Sullivan D."/>
            <person name="Steele J."/>
            <person name="Unlu G."/>
            <person name="Saier M.H. Jr."/>
            <person name="Klaenhammer T."/>
            <person name="Richardson P."/>
            <person name="Kozyavkin S."/>
            <person name="Weimer B.C."/>
            <person name="Mills D.A."/>
        </authorList>
    </citation>
    <scope>NUCLEOTIDE SEQUENCE [LARGE SCALE GENOMIC DNA]</scope>
    <source>
        <strain>ATCC BAA-331 / PSU-1</strain>
    </source>
</reference>
<proteinExistence type="inferred from homology"/>
<name>XPT_OENOB</name>
<gene>
    <name evidence="1" type="primary">xpt</name>
    <name type="ordered locus">OEOE_0537</name>
</gene>
<sequence length="206" mass="22794">MKLDRRLVIKILEEKIKSEGIVLGSDILKVNSFLNHQIDPFLMSQIGQAFAEKFSHENISKVLTIESSGIAPALMTSLQLQVPMIFARKHQSRTLNEEFFSASVYSYTKQTENQIAVSKRFINPGDRVLIIDDFLANGQAVQGLLDIINQAGASAVGVGIVIEKRFQAGHQLILSKNLPLVSLASIDRFEDGQVVFSKQGETSHVN</sequence>
<keyword id="KW-0963">Cytoplasm</keyword>
<keyword id="KW-0328">Glycosyltransferase</keyword>
<keyword id="KW-0660">Purine salvage</keyword>
<keyword id="KW-1185">Reference proteome</keyword>
<keyword id="KW-0808">Transferase</keyword>
<feature type="chain" id="PRO_0000339723" description="Xanthine phosphoribosyltransferase">
    <location>
        <begin position="1"/>
        <end position="206"/>
    </location>
</feature>
<feature type="binding site" evidence="1">
    <location>
        <position position="28"/>
    </location>
    <ligand>
        <name>xanthine</name>
        <dbReference type="ChEBI" id="CHEBI:17712"/>
    </ligand>
</feature>
<feature type="binding site" evidence="1">
    <location>
        <position position="35"/>
    </location>
    <ligand>
        <name>xanthine</name>
        <dbReference type="ChEBI" id="CHEBI:17712"/>
    </ligand>
</feature>
<feature type="binding site" evidence="1">
    <location>
        <begin position="136"/>
        <end position="140"/>
    </location>
    <ligand>
        <name>5-phospho-alpha-D-ribose 1-diphosphate</name>
        <dbReference type="ChEBI" id="CHEBI:58017"/>
    </ligand>
</feature>
<feature type="binding site" evidence="1">
    <location>
        <position position="164"/>
    </location>
    <ligand>
        <name>xanthine</name>
        <dbReference type="ChEBI" id="CHEBI:17712"/>
    </ligand>
</feature>
<comment type="function">
    <text evidence="1">Converts the preformed base xanthine, a product of nucleic acid breakdown, to xanthosine 5'-monophosphate (XMP), so it can be reused for RNA or DNA synthesis.</text>
</comment>
<comment type="catalytic activity">
    <reaction evidence="1">
        <text>XMP + diphosphate = xanthine + 5-phospho-alpha-D-ribose 1-diphosphate</text>
        <dbReference type="Rhea" id="RHEA:10800"/>
        <dbReference type="ChEBI" id="CHEBI:17712"/>
        <dbReference type="ChEBI" id="CHEBI:33019"/>
        <dbReference type="ChEBI" id="CHEBI:57464"/>
        <dbReference type="ChEBI" id="CHEBI:58017"/>
        <dbReference type="EC" id="2.4.2.22"/>
    </reaction>
</comment>
<comment type="pathway">
    <text evidence="1">Purine metabolism; XMP biosynthesis via salvage pathway; XMP from xanthine: step 1/1.</text>
</comment>
<comment type="subunit">
    <text evidence="1">Homodimer.</text>
</comment>
<comment type="subcellular location">
    <subcellularLocation>
        <location evidence="1">Cytoplasm</location>
    </subcellularLocation>
</comment>
<comment type="similarity">
    <text evidence="1">Belongs to the purine/pyrimidine phosphoribosyltransferase family. Xpt subfamily.</text>
</comment>
<organism>
    <name type="scientific">Oenococcus oeni (strain ATCC BAA-331 / PSU-1)</name>
    <dbReference type="NCBI Taxonomy" id="203123"/>
    <lineage>
        <taxon>Bacteria</taxon>
        <taxon>Bacillati</taxon>
        <taxon>Bacillota</taxon>
        <taxon>Bacilli</taxon>
        <taxon>Lactobacillales</taxon>
        <taxon>Lactobacillaceae</taxon>
        <taxon>Oenococcus</taxon>
    </lineage>
</organism>
<protein>
    <recommendedName>
        <fullName evidence="1">Xanthine phosphoribosyltransferase</fullName>
        <shortName evidence="1">XPRTase</shortName>
        <ecNumber evidence="1">2.4.2.22</ecNumber>
    </recommendedName>
</protein>
<evidence type="ECO:0000255" key="1">
    <source>
        <dbReference type="HAMAP-Rule" id="MF_01184"/>
    </source>
</evidence>